<feature type="chain" id="PRO_0000110510" description="Beta-ketoacyl-[acyl-carrier-protein] synthase III">
    <location>
        <begin position="1"/>
        <end position="318"/>
    </location>
</feature>
<feature type="region of interest" description="ACP-binding" evidence="1">
    <location>
        <begin position="246"/>
        <end position="250"/>
    </location>
</feature>
<feature type="active site" evidence="1">
    <location>
        <position position="113"/>
    </location>
</feature>
<feature type="active site" evidence="1">
    <location>
        <position position="245"/>
    </location>
</feature>
<feature type="active site" evidence="1">
    <location>
        <position position="275"/>
    </location>
</feature>
<protein>
    <recommendedName>
        <fullName evidence="1">Beta-ketoacyl-[acyl-carrier-protein] synthase III</fullName>
        <shortName evidence="1">Beta-ketoacyl-ACP synthase III</shortName>
        <shortName evidence="1">KAS III</shortName>
        <ecNumber evidence="1">2.3.1.180</ecNumber>
    </recommendedName>
    <alternativeName>
        <fullName evidence="1">3-oxoacyl-[acyl-carrier-protein] synthase 3</fullName>
    </alternativeName>
    <alternativeName>
        <fullName evidence="1">3-oxoacyl-[acyl-carrier-protein] synthase III</fullName>
    </alternativeName>
</protein>
<organism>
    <name type="scientific">Wolbachia pipientis wMel</name>
    <dbReference type="NCBI Taxonomy" id="163164"/>
    <lineage>
        <taxon>Bacteria</taxon>
        <taxon>Pseudomonadati</taxon>
        <taxon>Pseudomonadota</taxon>
        <taxon>Alphaproteobacteria</taxon>
        <taxon>Rickettsiales</taxon>
        <taxon>Anaplasmataceae</taxon>
        <taxon>Wolbachieae</taxon>
        <taxon>Wolbachia</taxon>
    </lineage>
</organism>
<evidence type="ECO:0000255" key="1">
    <source>
        <dbReference type="HAMAP-Rule" id="MF_01815"/>
    </source>
</evidence>
<name>FABH_WOLPM</name>
<gene>
    <name evidence="1" type="primary">fabH</name>
    <name type="ordered locus">WD_0985</name>
</gene>
<comment type="function">
    <text evidence="1">Catalyzes the condensation reaction of fatty acid synthesis by the addition to an acyl acceptor of two carbons from malonyl-ACP. Catalyzes the first condensation reaction which initiates fatty acid synthesis and may therefore play a role in governing the total rate of fatty acid production. Possesses both acetoacetyl-ACP synthase and acetyl transacylase activities. Its substrate specificity determines the biosynthesis of branched-chain and/or straight-chain of fatty acids.</text>
</comment>
<comment type="catalytic activity">
    <reaction evidence="1">
        <text>malonyl-[ACP] + acetyl-CoA + H(+) = 3-oxobutanoyl-[ACP] + CO2 + CoA</text>
        <dbReference type="Rhea" id="RHEA:12080"/>
        <dbReference type="Rhea" id="RHEA-COMP:9623"/>
        <dbReference type="Rhea" id="RHEA-COMP:9625"/>
        <dbReference type="ChEBI" id="CHEBI:15378"/>
        <dbReference type="ChEBI" id="CHEBI:16526"/>
        <dbReference type="ChEBI" id="CHEBI:57287"/>
        <dbReference type="ChEBI" id="CHEBI:57288"/>
        <dbReference type="ChEBI" id="CHEBI:78449"/>
        <dbReference type="ChEBI" id="CHEBI:78450"/>
        <dbReference type="EC" id="2.3.1.180"/>
    </reaction>
</comment>
<comment type="pathway">
    <text evidence="1">Lipid metabolism; fatty acid biosynthesis.</text>
</comment>
<comment type="subunit">
    <text evidence="1">Homodimer.</text>
</comment>
<comment type="subcellular location">
    <subcellularLocation>
        <location evidence="1">Cytoplasm</location>
    </subcellularLocation>
</comment>
<comment type="domain">
    <text evidence="1">The last Arg residue of the ACP-binding site is essential for the weak association between ACP/AcpP and FabH.</text>
</comment>
<comment type="similarity">
    <text evidence="1">Belongs to the thiolase-like superfamily. FabH family.</text>
</comment>
<proteinExistence type="inferred from homology"/>
<reference key="1">
    <citation type="journal article" date="2004" name="PLoS Biol.">
        <title>Phylogenomics of the reproductive parasite Wolbachia pipientis wMel: a streamlined genome overrun by mobile genetic elements.</title>
        <authorList>
            <person name="Wu M."/>
            <person name="Sun L.V."/>
            <person name="Vamathevan J.J."/>
            <person name="Riegler M."/>
            <person name="DeBoy R.T."/>
            <person name="Brownlie J.C."/>
            <person name="McGraw E.A."/>
            <person name="Martin W."/>
            <person name="Esser C."/>
            <person name="Ahmadinejad N."/>
            <person name="Wiegand C."/>
            <person name="Madupu R."/>
            <person name="Beanan M.J."/>
            <person name="Brinkac L.M."/>
            <person name="Daugherty S.C."/>
            <person name="Durkin A.S."/>
            <person name="Kolonay J.F."/>
            <person name="Nelson W.C."/>
            <person name="Mohamoud Y."/>
            <person name="Lee P."/>
            <person name="Berry K.J."/>
            <person name="Young M.B."/>
            <person name="Utterback T.R."/>
            <person name="Weidman J.F."/>
            <person name="Nierman W.C."/>
            <person name="Paulsen I.T."/>
            <person name="Nelson K.E."/>
            <person name="Tettelin H."/>
            <person name="O'Neill S.L."/>
            <person name="Eisen J.A."/>
        </authorList>
    </citation>
    <scope>NUCLEOTIDE SEQUENCE [LARGE SCALE GENOMIC DNA]</scope>
</reference>
<accession>Q73GG9</accession>
<keyword id="KW-0012">Acyltransferase</keyword>
<keyword id="KW-0963">Cytoplasm</keyword>
<keyword id="KW-0275">Fatty acid biosynthesis</keyword>
<keyword id="KW-0276">Fatty acid metabolism</keyword>
<keyword id="KW-0444">Lipid biosynthesis</keyword>
<keyword id="KW-0443">Lipid metabolism</keyword>
<keyword id="KW-0511">Multifunctional enzyme</keyword>
<keyword id="KW-0808">Transferase</keyword>
<dbReference type="EC" id="2.3.1.180" evidence="1"/>
<dbReference type="EMBL" id="AE017196">
    <property type="protein sequence ID" value="AAS14647.1"/>
    <property type="molecule type" value="Genomic_DNA"/>
</dbReference>
<dbReference type="RefSeq" id="WP_010962965.1">
    <property type="nucleotide sequence ID" value="NZ_OX384529.1"/>
</dbReference>
<dbReference type="SMR" id="Q73GG9"/>
<dbReference type="EnsemblBacteria" id="AAS14647">
    <property type="protein sequence ID" value="AAS14647"/>
    <property type="gene ID" value="WD_0985"/>
</dbReference>
<dbReference type="KEGG" id="wol:WD_0985"/>
<dbReference type="eggNOG" id="COG0332">
    <property type="taxonomic scope" value="Bacteria"/>
</dbReference>
<dbReference type="UniPathway" id="UPA00094"/>
<dbReference type="Proteomes" id="UP000008215">
    <property type="component" value="Chromosome"/>
</dbReference>
<dbReference type="GO" id="GO:0005737">
    <property type="term" value="C:cytoplasm"/>
    <property type="evidence" value="ECO:0007669"/>
    <property type="project" value="UniProtKB-SubCell"/>
</dbReference>
<dbReference type="GO" id="GO:0004315">
    <property type="term" value="F:3-oxoacyl-[acyl-carrier-protein] synthase activity"/>
    <property type="evidence" value="ECO:0007669"/>
    <property type="project" value="InterPro"/>
</dbReference>
<dbReference type="GO" id="GO:0033818">
    <property type="term" value="F:beta-ketoacyl-acyl-carrier-protein synthase III activity"/>
    <property type="evidence" value="ECO:0007669"/>
    <property type="project" value="UniProtKB-UniRule"/>
</dbReference>
<dbReference type="GO" id="GO:0006633">
    <property type="term" value="P:fatty acid biosynthetic process"/>
    <property type="evidence" value="ECO:0007669"/>
    <property type="project" value="UniProtKB-UniRule"/>
</dbReference>
<dbReference type="GO" id="GO:0044550">
    <property type="term" value="P:secondary metabolite biosynthetic process"/>
    <property type="evidence" value="ECO:0007669"/>
    <property type="project" value="TreeGrafter"/>
</dbReference>
<dbReference type="CDD" id="cd00830">
    <property type="entry name" value="KAS_III"/>
    <property type="match status" value="1"/>
</dbReference>
<dbReference type="FunFam" id="3.40.47.10:FF:000004">
    <property type="entry name" value="3-oxoacyl-[acyl-carrier-protein] synthase 3"/>
    <property type="match status" value="1"/>
</dbReference>
<dbReference type="Gene3D" id="3.40.47.10">
    <property type="match status" value="1"/>
</dbReference>
<dbReference type="HAMAP" id="MF_01815">
    <property type="entry name" value="FabH"/>
    <property type="match status" value="1"/>
</dbReference>
<dbReference type="InterPro" id="IPR013747">
    <property type="entry name" value="ACP_syn_III_C"/>
</dbReference>
<dbReference type="InterPro" id="IPR013751">
    <property type="entry name" value="ACP_syn_III_N"/>
</dbReference>
<dbReference type="InterPro" id="IPR004655">
    <property type="entry name" value="FabH"/>
</dbReference>
<dbReference type="InterPro" id="IPR016039">
    <property type="entry name" value="Thiolase-like"/>
</dbReference>
<dbReference type="NCBIfam" id="TIGR00747">
    <property type="entry name" value="fabH"/>
    <property type="match status" value="1"/>
</dbReference>
<dbReference type="NCBIfam" id="NF006829">
    <property type="entry name" value="PRK09352.1"/>
    <property type="match status" value="1"/>
</dbReference>
<dbReference type="PANTHER" id="PTHR34069">
    <property type="entry name" value="3-OXOACYL-[ACYL-CARRIER-PROTEIN] SYNTHASE 3"/>
    <property type="match status" value="1"/>
</dbReference>
<dbReference type="PANTHER" id="PTHR34069:SF2">
    <property type="entry name" value="BETA-KETOACYL-[ACYL-CARRIER-PROTEIN] SYNTHASE III"/>
    <property type="match status" value="1"/>
</dbReference>
<dbReference type="Pfam" id="PF08545">
    <property type="entry name" value="ACP_syn_III"/>
    <property type="match status" value="1"/>
</dbReference>
<dbReference type="Pfam" id="PF08541">
    <property type="entry name" value="ACP_syn_III_C"/>
    <property type="match status" value="1"/>
</dbReference>
<dbReference type="SUPFAM" id="SSF53901">
    <property type="entry name" value="Thiolase-like"/>
    <property type="match status" value="1"/>
</dbReference>
<sequence length="318" mass="34402">MNKSFILSTGSYLPRKMLSNNEIASIVETSDEWIRQRTGIVQRHIADEGELTSDLAVNAAKSAIEKAKISVDEIDLIIVATTTPDKTFPSCATIVQSKLKCKNAFAFDVQAACSGFIYAVTVADSLIKSNNRIKYALVIGAEIMSRIVDWEDRSTCVLFGDGAGAVVMKSEMGRSGIISTNLYSDGNVDILCTNGGISSTGDSGKICMNGREVFKHAVDKLTASVEETLKCNNLKITDIDWLIPHQANIRIIEAVVKKLDFPIEKVINTVDKHANTSAASIPLALDYAIQESKIKSGNLVLLISIGAGLTWGSVLLHY</sequence>